<sequence>MRIKYPPQTVDRVLIFDTTLRDGEQSPGASLNVDEKLTIARQLARLGVDIIEAGFPFASPGDFEAVQRIAETVGTETGPVICGLARATRQDIEAAAKALKPAYYPRIHTFIATSDIHLEYKLRKTRAEVLEIAQEMVAYAKSFVDDVEFSPEDAGRSDPEFLYEVLERVIDAGATTVNIPDTVGYTTPAEFGALIKGIKENVPNIDRAVISVHGHNDLGLAVANFLEAVKNGARQLECTINGIGERAGNAALEELVMALYVRRQYFNPFLGRPPESEAPLTNINTREIYKTSRLVSNLTGMLIQPNKAIVGANAFAHQSGIHQDGVLKHKQTYEIMDAQLIGLADNQIVLGKLSGRNAFATRLRELGFELSETELNKAFLRFKDLADKKKEITDWDLEAIAKDETQGIDLQGYQLEFVQVSCGDHARPTATVTVRTPSGEELTDAAIGTGPVDAVYRAINRVVQIPNRLIEYSVQSVTAGIDAIGEVTIRLQHQDRIYSGHAANTDIIVASAQAYMNALNRLYRGLEQRALHPQA</sequence>
<feature type="chain" id="PRO_0000140388" description="2-isopropylmalate synthase">
    <location>
        <begin position="1"/>
        <end position="535"/>
    </location>
</feature>
<feature type="domain" description="Pyruvate carboxyltransferase" evidence="1">
    <location>
        <begin position="13"/>
        <end position="274"/>
    </location>
</feature>
<feature type="region of interest" description="Regulatory domain" evidence="1">
    <location>
        <begin position="414"/>
        <end position="535"/>
    </location>
</feature>
<feature type="binding site" evidence="1">
    <location>
        <position position="22"/>
    </location>
    <ligand>
        <name>Mn(2+)</name>
        <dbReference type="ChEBI" id="CHEBI:29035"/>
    </ligand>
</feature>
<feature type="binding site" evidence="1">
    <location>
        <position position="213"/>
    </location>
    <ligand>
        <name>Mn(2+)</name>
        <dbReference type="ChEBI" id="CHEBI:29035"/>
    </ligand>
</feature>
<feature type="binding site" evidence="1">
    <location>
        <position position="215"/>
    </location>
    <ligand>
        <name>Mn(2+)</name>
        <dbReference type="ChEBI" id="CHEBI:29035"/>
    </ligand>
</feature>
<feature type="binding site" evidence="1">
    <location>
        <position position="249"/>
    </location>
    <ligand>
        <name>Mn(2+)</name>
        <dbReference type="ChEBI" id="CHEBI:29035"/>
    </ligand>
</feature>
<comment type="function">
    <text evidence="1">Catalyzes the condensation of the acetyl group of acetyl-CoA with 3-methyl-2-oxobutanoate (2-ketoisovalerate) to form 3-carboxy-3-hydroxy-4-methylpentanoate (2-isopropylmalate).</text>
</comment>
<comment type="catalytic activity">
    <reaction evidence="1">
        <text>3-methyl-2-oxobutanoate + acetyl-CoA + H2O = (2S)-2-isopropylmalate + CoA + H(+)</text>
        <dbReference type="Rhea" id="RHEA:21524"/>
        <dbReference type="ChEBI" id="CHEBI:1178"/>
        <dbReference type="ChEBI" id="CHEBI:11851"/>
        <dbReference type="ChEBI" id="CHEBI:15377"/>
        <dbReference type="ChEBI" id="CHEBI:15378"/>
        <dbReference type="ChEBI" id="CHEBI:57287"/>
        <dbReference type="ChEBI" id="CHEBI:57288"/>
        <dbReference type="EC" id="2.3.3.13"/>
    </reaction>
</comment>
<comment type="cofactor">
    <cofactor evidence="1">
        <name>Mn(2+)</name>
        <dbReference type="ChEBI" id="CHEBI:29035"/>
    </cofactor>
</comment>
<comment type="pathway">
    <text evidence="1">Amino-acid biosynthesis; L-leucine biosynthesis; L-leucine from 3-methyl-2-oxobutanoate: step 1/4.</text>
</comment>
<comment type="subunit">
    <text evidence="1">Homodimer.</text>
</comment>
<comment type="subcellular location">
    <subcellularLocation>
        <location evidence="1">Cytoplasm</location>
    </subcellularLocation>
</comment>
<comment type="similarity">
    <text evidence="1">Belongs to the alpha-IPM synthase/homocitrate synthase family. LeuA type 1 subfamily.</text>
</comment>
<keyword id="KW-0028">Amino-acid biosynthesis</keyword>
<keyword id="KW-0100">Branched-chain amino acid biosynthesis</keyword>
<keyword id="KW-0963">Cytoplasm</keyword>
<keyword id="KW-0432">Leucine biosynthesis</keyword>
<keyword id="KW-0464">Manganese</keyword>
<keyword id="KW-0479">Metal-binding</keyword>
<keyword id="KW-1185">Reference proteome</keyword>
<keyword id="KW-0808">Transferase</keyword>
<accession>Q8DJ32</accession>
<name>LEU1_THEVB</name>
<dbReference type="EC" id="2.3.3.13" evidence="1"/>
<dbReference type="EMBL" id="BA000039">
    <property type="protein sequence ID" value="BAC08949.1"/>
    <property type="molecule type" value="Genomic_DNA"/>
</dbReference>
<dbReference type="RefSeq" id="NP_682187.1">
    <property type="nucleotide sequence ID" value="NC_004113.1"/>
</dbReference>
<dbReference type="RefSeq" id="WP_011057237.1">
    <property type="nucleotide sequence ID" value="NC_004113.1"/>
</dbReference>
<dbReference type="SMR" id="Q8DJ32"/>
<dbReference type="STRING" id="197221.gene:10747996"/>
<dbReference type="EnsemblBacteria" id="BAC08949">
    <property type="protein sequence ID" value="BAC08949"/>
    <property type="gene ID" value="BAC08949"/>
</dbReference>
<dbReference type="KEGG" id="tel:tll1397"/>
<dbReference type="PATRIC" id="fig|197221.4.peg.1470"/>
<dbReference type="eggNOG" id="COG0119">
    <property type="taxonomic scope" value="Bacteria"/>
</dbReference>
<dbReference type="UniPathway" id="UPA00048">
    <property type="reaction ID" value="UER00070"/>
</dbReference>
<dbReference type="Proteomes" id="UP000000440">
    <property type="component" value="Chromosome"/>
</dbReference>
<dbReference type="GO" id="GO:0005737">
    <property type="term" value="C:cytoplasm"/>
    <property type="evidence" value="ECO:0007669"/>
    <property type="project" value="UniProtKB-SubCell"/>
</dbReference>
<dbReference type="GO" id="GO:0003852">
    <property type="term" value="F:2-isopropylmalate synthase activity"/>
    <property type="evidence" value="ECO:0007669"/>
    <property type="project" value="UniProtKB-UniRule"/>
</dbReference>
<dbReference type="GO" id="GO:0003985">
    <property type="term" value="F:acetyl-CoA C-acetyltransferase activity"/>
    <property type="evidence" value="ECO:0007669"/>
    <property type="project" value="UniProtKB-UniRule"/>
</dbReference>
<dbReference type="GO" id="GO:0030145">
    <property type="term" value="F:manganese ion binding"/>
    <property type="evidence" value="ECO:0007669"/>
    <property type="project" value="UniProtKB-UniRule"/>
</dbReference>
<dbReference type="GO" id="GO:0009098">
    <property type="term" value="P:L-leucine biosynthetic process"/>
    <property type="evidence" value="ECO:0007669"/>
    <property type="project" value="UniProtKB-UniRule"/>
</dbReference>
<dbReference type="CDD" id="cd07940">
    <property type="entry name" value="DRE_TIM_IPMS"/>
    <property type="match status" value="1"/>
</dbReference>
<dbReference type="FunFam" id="1.10.238.260:FF:000001">
    <property type="entry name" value="2-isopropylmalate synthase"/>
    <property type="match status" value="1"/>
</dbReference>
<dbReference type="FunFam" id="3.20.20.70:FF:000010">
    <property type="entry name" value="2-isopropylmalate synthase"/>
    <property type="match status" value="1"/>
</dbReference>
<dbReference type="FunFam" id="3.30.160.270:FF:000001">
    <property type="entry name" value="2-isopropylmalate synthase"/>
    <property type="match status" value="1"/>
</dbReference>
<dbReference type="Gene3D" id="1.10.238.260">
    <property type="match status" value="1"/>
</dbReference>
<dbReference type="Gene3D" id="3.30.160.270">
    <property type="match status" value="1"/>
</dbReference>
<dbReference type="Gene3D" id="3.20.20.70">
    <property type="entry name" value="Aldolase class I"/>
    <property type="match status" value="1"/>
</dbReference>
<dbReference type="HAMAP" id="MF_01025">
    <property type="entry name" value="LeuA_type1"/>
    <property type="match status" value="1"/>
</dbReference>
<dbReference type="InterPro" id="IPR050073">
    <property type="entry name" value="2-IPM_HCS-like"/>
</dbReference>
<dbReference type="InterPro" id="IPR013709">
    <property type="entry name" value="2-isopropylmalate_synth_dimer"/>
</dbReference>
<dbReference type="InterPro" id="IPR002034">
    <property type="entry name" value="AIPM/Hcit_synth_CS"/>
</dbReference>
<dbReference type="InterPro" id="IPR013785">
    <property type="entry name" value="Aldolase_TIM"/>
</dbReference>
<dbReference type="InterPro" id="IPR054691">
    <property type="entry name" value="LeuA/HCS_post-cat"/>
</dbReference>
<dbReference type="InterPro" id="IPR036230">
    <property type="entry name" value="LeuA_allosteric_dom_sf"/>
</dbReference>
<dbReference type="InterPro" id="IPR005671">
    <property type="entry name" value="LeuA_bact_synth"/>
</dbReference>
<dbReference type="InterPro" id="IPR000891">
    <property type="entry name" value="PYR_CT"/>
</dbReference>
<dbReference type="NCBIfam" id="TIGR00973">
    <property type="entry name" value="leuA_bact"/>
    <property type="match status" value="1"/>
</dbReference>
<dbReference type="NCBIfam" id="NF002086">
    <property type="entry name" value="PRK00915.1-3"/>
    <property type="match status" value="1"/>
</dbReference>
<dbReference type="PANTHER" id="PTHR10277:SF9">
    <property type="entry name" value="2-ISOPROPYLMALATE SYNTHASE 1, CHLOROPLASTIC-RELATED"/>
    <property type="match status" value="1"/>
</dbReference>
<dbReference type="PANTHER" id="PTHR10277">
    <property type="entry name" value="HOMOCITRATE SYNTHASE-RELATED"/>
    <property type="match status" value="1"/>
</dbReference>
<dbReference type="Pfam" id="PF22617">
    <property type="entry name" value="HCS_D2"/>
    <property type="match status" value="1"/>
</dbReference>
<dbReference type="Pfam" id="PF00682">
    <property type="entry name" value="HMGL-like"/>
    <property type="match status" value="1"/>
</dbReference>
<dbReference type="Pfam" id="PF08502">
    <property type="entry name" value="LeuA_dimer"/>
    <property type="match status" value="1"/>
</dbReference>
<dbReference type="SMART" id="SM00917">
    <property type="entry name" value="LeuA_dimer"/>
    <property type="match status" value="1"/>
</dbReference>
<dbReference type="SUPFAM" id="SSF110921">
    <property type="entry name" value="2-isopropylmalate synthase LeuA, allosteric (dimerisation) domain"/>
    <property type="match status" value="1"/>
</dbReference>
<dbReference type="SUPFAM" id="SSF51569">
    <property type="entry name" value="Aldolase"/>
    <property type="match status" value="1"/>
</dbReference>
<dbReference type="PROSITE" id="PS00815">
    <property type="entry name" value="AIPM_HOMOCIT_SYNTH_1"/>
    <property type="match status" value="1"/>
</dbReference>
<dbReference type="PROSITE" id="PS00816">
    <property type="entry name" value="AIPM_HOMOCIT_SYNTH_2"/>
    <property type="match status" value="1"/>
</dbReference>
<dbReference type="PROSITE" id="PS50991">
    <property type="entry name" value="PYR_CT"/>
    <property type="match status" value="1"/>
</dbReference>
<gene>
    <name evidence="1" type="primary">leuA</name>
    <name type="ordered locus">tll1397</name>
</gene>
<reference key="1">
    <citation type="journal article" date="2002" name="DNA Res.">
        <title>Complete genome structure of the thermophilic cyanobacterium Thermosynechococcus elongatus BP-1.</title>
        <authorList>
            <person name="Nakamura Y."/>
            <person name="Kaneko T."/>
            <person name="Sato S."/>
            <person name="Ikeuchi M."/>
            <person name="Katoh H."/>
            <person name="Sasamoto S."/>
            <person name="Watanabe A."/>
            <person name="Iriguchi M."/>
            <person name="Kawashima K."/>
            <person name="Kimura T."/>
            <person name="Kishida Y."/>
            <person name="Kiyokawa C."/>
            <person name="Kohara M."/>
            <person name="Matsumoto M."/>
            <person name="Matsuno A."/>
            <person name="Nakazaki N."/>
            <person name="Shimpo S."/>
            <person name="Sugimoto M."/>
            <person name="Takeuchi C."/>
            <person name="Yamada M."/>
            <person name="Tabata S."/>
        </authorList>
    </citation>
    <scope>NUCLEOTIDE SEQUENCE [LARGE SCALE GENOMIC DNA]</scope>
    <source>
        <strain>NIES-2133 / IAM M-273 / BP-1</strain>
    </source>
</reference>
<evidence type="ECO:0000255" key="1">
    <source>
        <dbReference type="HAMAP-Rule" id="MF_01025"/>
    </source>
</evidence>
<organism>
    <name type="scientific">Thermosynechococcus vestitus (strain NIES-2133 / IAM M-273 / BP-1)</name>
    <dbReference type="NCBI Taxonomy" id="197221"/>
    <lineage>
        <taxon>Bacteria</taxon>
        <taxon>Bacillati</taxon>
        <taxon>Cyanobacteriota</taxon>
        <taxon>Cyanophyceae</taxon>
        <taxon>Acaryochloridales</taxon>
        <taxon>Thermosynechococcaceae</taxon>
        <taxon>Thermosynechococcus</taxon>
    </lineage>
</organism>
<protein>
    <recommendedName>
        <fullName evidence="1">2-isopropylmalate synthase</fullName>
        <ecNumber evidence="1">2.3.3.13</ecNumber>
    </recommendedName>
    <alternativeName>
        <fullName evidence="1">Alpha-IPM synthase</fullName>
    </alternativeName>
    <alternativeName>
        <fullName evidence="1">Alpha-isopropylmalate synthase</fullName>
    </alternativeName>
</protein>
<proteinExistence type="inferred from homology"/>